<name>FLUC_ECO7I</name>
<reference key="1">
    <citation type="journal article" date="2009" name="PLoS Genet.">
        <title>Organised genome dynamics in the Escherichia coli species results in highly diverse adaptive paths.</title>
        <authorList>
            <person name="Touchon M."/>
            <person name="Hoede C."/>
            <person name="Tenaillon O."/>
            <person name="Barbe V."/>
            <person name="Baeriswyl S."/>
            <person name="Bidet P."/>
            <person name="Bingen E."/>
            <person name="Bonacorsi S."/>
            <person name="Bouchier C."/>
            <person name="Bouvet O."/>
            <person name="Calteau A."/>
            <person name="Chiapello H."/>
            <person name="Clermont O."/>
            <person name="Cruveiller S."/>
            <person name="Danchin A."/>
            <person name="Diard M."/>
            <person name="Dossat C."/>
            <person name="Karoui M.E."/>
            <person name="Frapy E."/>
            <person name="Garry L."/>
            <person name="Ghigo J.M."/>
            <person name="Gilles A.M."/>
            <person name="Johnson J."/>
            <person name="Le Bouguenec C."/>
            <person name="Lescat M."/>
            <person name="Mangenot S."/>
            <person name="Martinez-Jehanne V."/>
            <person name="Matic I."/>
            <person name="Nassif X."/>
            <person name="Oztas S."/>
            <person name="Petit M.A."/>
            <person name="Pichon C."/>
            <person name="Rouy Z."/>
            <person name="Ruf C.S."/>
            <person name="Schneider D."/>
            <person name="Tourret J."/>
            <person name="Vacherie B."/>
            <person name="Vallenet D."/>
            <person name="Medigue C."/>
            <person name="Rocha E.P.C."/>
            <person name="Denamur E."/>
        </authorList>
    </citation>
    <scope>NUCLEOTIDE SEQUENCE [LARGE SCALE GENOMIC DNA]</scope>
    <source>
        <strain>IAI39 / ExPEC</strain>
    </source>
</reference>
<feature type="chain" id="PRO_1000125123" description="Fluoride-specific ion channel FluC">
    <location>
        <begin position="1"/>
        <end position="127"/>
    </location>
</feature>
<feature type="transmembrane region" description="Helical" evidence="1">
    <location>
        <begin position="4"/>
        <end position="24"/>
    </location>
</feature>
<feature type="transmembrane region" description="Helical" evidence="1">
    <location>
        <begin position="35"/>
        <end position="55"/>
    </location>
</feature>
<feature type="transmembrane region" description="Helical" evidence="1">
    <location>
        <begin position="71"/>
        <end position="91"/>
    </location>
</feature>
<feature type="transmembrane region" description="Helical" evidence="1">
    <location>
        <begin position="103"/>
        <end position="123"/>
    </location>
</feature>
<feature type="binding site" evidence="1">
    <location>
        <position position="75"/>
    </location>
    <ligand>
        <name>Na(+)</name>
        <dbReference type="ChEBI" id="CHEBI:29101"/>
        <note>structural</note>
    </ligand>
</feature>
<feature type="binding site" evidence="1">
    <location>
        <position position="78"/>
    </location>
    <ligand>
        <name>Na(+)</name>
        <dbReference type="ChEBI" id="CHEBI:29101"/>
        <note>structural</note>
    </ligand>
</feature>
<comment type="function">
    <text evidence="1">Fluoride-specific ion channel. Important for reducing fluoride concentration in the cell, thus reducing its toxicity.</text>
</comment>
<comment type="catalytic activity">
    <reaction evidence="1">
        <text>fluoride(in) = fluoride(out)</text>
        <dbReference type="Rhea" id="RHEA:76159"/>
        <dbReference type="ChEBI" id="CHEBI:17051"/>
    </reaction>
    <physiologicalReaction direction="left-to-right" evidence="1">
        <dbReference type="Rhea" id="RHEA:76160"/>
    </physiologicalReaction>
</comment>
<comment type="activity regulation">
    <text evidence="1">Na(+) is not transported, but it plays an essential structural role and its presence is essential for fluoride channel function.</text>
</comment>
<comment type="subcellular location">
    <subcellularLocation>
        <location evidence="1">Cell inner membrane</location>
        <topology evidence="1">Multi-pass membrane protein</topology>
    </subcellularLocation>
</comment>
<comment type="similarity">
    <text evidence="1">Belongs to the fluoride channel Fluc/FEX (TC 1.A.43) family.</text>
</comment>
<evidence type="ECO:0000255" key="1">
    <source>
        <dbReference type="HAMAP-Rule" id="MF_00454"/>
    </source>
</evidence>
<gene>
    <name evidence="1" type="primary">fluC</name>
    <name evidence="1" type="synonym">crcB</name>
    <name type="ordered locus">ECIAI39_0600</name>
</gene>
<keyword id="KW-0997">Cell inner membrane</keyword>
<keyword id="KW-1003">Cell membrane</keyword>
<keyword id="KW-0407">Ion channel</keyword>
<keyword id="KW-0406">Ion transport</keyword>
<keyword id="KW-0472">Membrane</keyword>
<keyword id="KW-0479">Metal-binding</keyword>
<keyword id="KW-0915">Sodium</keyword>
<keyword id="KW-0812">Transmembrane</keyword>
<keyword id="KW-1133">Transmembrane helix</keyword>
<keyword id="KW-0813">Transport</keyword>
<dbReference type="EMBL" id="CU928164">
    <property type="protein sequence ID" value="CAR16737.1"/>
    <property type="molecule type" value="Genomic_DNA"/>
</dbReference>
<dbReference type="RefSeq" id="WP_000939750.1">
    <property type="nucleotide sequence ID" value="NC_011750.1"/>
</dbReference>
<dbReference type="RefSeq" id="YP_002406626.1">
    <property type="nucleotide sequence ID" value="NC_011750.1"/>
</dbReference>
<dbReference type="SMR" id="B7NLY4"/>
<dbReference type="STRING" id="585057.ECIAI39_0600"/>
<dbReference type="KEGG" id="ect:ECIAI39_0600"/>
<dbReference type="PATRIC" id="fig|585057.6.peg.637"/>
<dbReference type="HOGENOM" id="CLU_114342_3_3_6"/>
<dbReference type="Proteomes" id="UP000000749">
    <property type="component" value="Chromosome"/>
</dbReference>
<dbReference type="GO" id="GO:0005886">
    <property type="term" value="C:plasma membrane"/>
    <property type="evidence" value="ECO:0007669"/>
    <property type="project" value="UniProtKB-SubCell"/>
</dbReference>
<dbReference type="GO" id="GO:0062054">
    <property type="term" value="F:fluoride channel activity"/>
    <property type="evidence" value="ECO:0007669"/>
    <property type="project" value="UniProtKB-UniRule"/>
</dbReference>
<dbReference type="GO" id="GO:0046872">
    <property type="term" value="F:metal ion binding"/>
    <property type="evidence" value="ECO:0007669"/>
    <property type="project" value="UniProtKB-KW"/>
</dbReference>
<dbReference type="GO" id="GO:0140114">
    <property type="term" value="P:cellular detoxification of fluoride"/>
    <property type="evidence" value="ECO:0007669"/>
    <property type="project" value="UniProtKB-UniRule"/>
</dbReference>
<dbReference type="HAMAP" id="MF_00454">
    <property type="entry name" value="FluC"/>
    <property type="match status" value="1"/>
</dbReference>
<dbReference type="InterPro" id="IPR003691">
    <property type="entry name" value="FluC"/>
</dbReference>
<dbReference type="NCBIfam" id="TIGR00494">
    <property type="entry name" value="crcB"/>
    <property type="match status" value="1"/>
</dbReference>
<dbReference type="NCBIfam" id="NF010792">
    <property type="entry name" value="PRK14196.1"/>
    <property type="match status" value="1"/>
</dbReference>
<dbReference type="PANTHER" id="PTHR28259">
    <property type="entry name" value="FLUORIDE EXPORT PROTEIN 1-RELATED"/>
    <property type="match status" value="1"/>
</dbReference>
<dbReference type="PANTHER" id="PTHR28259:SF1">
    <property type="entry name" value="FLUORIDE EXPORT PROTEIN 1-RELATED"/>
    <property type="match status" value="1"/>
</dbReference>
<dbReference type="Pfam" id="PF02537">
    <property type="entry name" value="CRCB"/>
    <property type="match status" value="1"/>
</dbReference>
<sequence>MLQLLLAVFIGGGTGSVARWLLSMRFNPLHQAIPLGTLTANLIGAFIIGMGFAWFSRMTNIDPVWKVLITTGFCGGLTTFSTFSAEVVFLLQEGRFGWTLLNVFVNLLGSFAMTALAFWLFSASTAH</sequence>
<accession>B7NLY4</accession>
<protein>
    <recommendedName>
        <fullName evidence="1">Fluoride-specific ion channel FluC</fullName>
    </recommendedName>
</protein>
<proteinExistence type="inferred from homology"/>
<organism>
    <name type="scientific">Escherichia coli O7:K1 (strain IAI39 / ExPEC)</name>
    <dbReference type="NCBI Taxonomy" id="585057"/>
    <lineage>
        <taxon>Bacteria</taxon>
        <taxon>Pseudomonadati</taxon>
        <taxon>Pseudomonadota</taxon>
        <taxon>Gammaproteobacteria</taxon>
        <taxon>Enterobacterales</taxon>
        <taxon>Enterobacteriaceae</taxon>
        <taxon>Escherichia</taxon>
    </lineage>
</organism>